<organism>
    <name type="scientific">Nautilia profundicola (strain ATCC BAA-1463 / DSM 18972 / AmH)</name>
    <dbReference type="NCBI Taxonomy" id="598659"/>
    <lineage>
        <taxon>Bacteria</taxon>
        <taxon>Pseudomonadati</taxon>
        <taxon>Campylobacterota</taxon>
        <taxon>Epsilonproteobacteria</taxon>
        <taxon>Nautiliales</taxon>
        <taxon>Nautiliaceae</taxon>
        <taxon>Nautilia</taxon>
    </lineage>
</organism>
<protein>
    <recommendedName>
        <fullName evidence="1">Phosphomethylpyrimidine synthase</fullName>
        <ecNumber evidence="1">4.1.99.17</ecNumber>
    </recommendedName>
    <alternativeName>
        <fullName evidence="1">Hydroxymethylpyrimidine phosphate synthase</fullName>
        <shortName evidence="1">HMP-P synthase</shortName>
        <shortName evidence="1">HMP-phosphate synthase</shortName>
        <shortName evidence="1">HMPP synthase</shortName>
    </alternativeName>
    <alternativeName>
        <fullName evidence="1">Thiamine biosynthesis protein ThiC</fullName>
    </alternativeName>
</protein>
<gene>
    <name evidence="1" type="primary">thiC</name>
    <name type="ordered locus">NAMH_0346</name>
</gene>
<feature type="chain" id="PRO_1000198061" description="Phosphomethylpyrimidine synthase">
    <location>
        <begin position="1"/>
        <end position="461"/>
    </location>
</feature>
<feature type="binding site" evidence="1">
    <location>
        <position position="80"/>
    </location>
    <ligand>
        <name>substrate</name>
    </ligand>
</feature>
<feature type="binding site" evidence="1">
    <location>
        <position position="109"/>
    </location>
    <ligand>
        <name>substrate</name>
    </ligand>
</feature>
<feature type="binding site" evidence="1">
    <location>
        <position position="139"/>
    </location>
    <ligand>
        <name>substrate</name>
    </ligand>
</feature>
<feature type="binding site" evidence="1">
    <location>
        <position position="174"/>
    </location>
    <ligand>
        <name>substrate</name>
    </ligand>
</feature>
<feature type="binding site" evidence="1">
    <location>
        <begin position="194"/>
        <end position="196"/>
    </location>
    <ligand>
        <name>substrate</name>
    </ligand>
</feature>
<feature type="binding site" evidence="1">
    <location>
        <begin position="235"/>
        <end position="238"/>
    </location>
    <ligand>
        <name>substrate</name>
    </ligand>
</feature>
<feature type="binding site" evidence="1">
    <location>
        <position position="274"/>
    </location>
    <ligand>
        <name>substrate</name>
    </ligand>
</feature>
<feature type="binding site" evidence="1">
    <location>
        <position position="278"/>
    </location>
    <ligand>
        <name>Zn(2+)</name>
        <dbReference type="ChEBI" id="CHEBI:29105"/>
    </ligand>
</feature>
<feature type="binding site" evidence="1">
    <location>
        <position position="301"/>
    </location>
    <ligand>
        <name>substrate</name>
    </ligand>
</feature>
<feature type="binding site" evidence="1">
    <location>
        <position position="342"/>
    </location>
    <ligand>
        <name>Zn(2+)</name>
        <dbReference type="ChEBI" id="CHEBI:29105"/>
    </ligand>
</feature>
<feature type="binding site" evidence="1">
    <location>
        <position position="422"/>
    </location>
    <ligand>
        <name>[4Fe-4S] cluster</name>
        <dbReference type="ChEBI" id="CHEBI:49883"/>
        <note>4Fe-4S-S-AdoMet</note>
    </ligand>
</feature>
<feature type="binding site" evidence="1">
    <location>
        <position position="425"/>
    </location>
    <ligand>
        <name>[4Fe-4S] cluster</name>
        <dbReference type="ChEBI" id="CHEBI:49883"/>
        <note>4Fe-4S-S-AdoMet</note>
    </ligand>
</feature>
<feature type="binding site" evidence="1">
    <location>
        <position position="430"/>
    </location>
    <ligand>
        <name>[4Fe-4S] cluster</name>
        <dbReference type="ChEBI" id="CHEBI:49883"/>
        <note>4Fe-4S-S-AdoMet</note>
    </ligand>
</feature>
<name>THIC_NAUPA</name>
<reference key="1">
    <citation type="journal article" date="2009" name="PLoS Genet.">
        <title>Adaptations to submarine hydrothermal environments exemplified by the genome of Nautilia profundicola.</title>
        <authorList>
            <person name="Campbell B.J."/>
            <person name="Smith J.L."/>
            <person name="Hanson T.E."/>
            <person name="Klotz M.G."/>
            <person name="Stein L.Y."/>
            <person name="Lee C.K."/>
            <person name="Wu D."/>
            <person name="Robinson J.M."/>
            <person name="Khouri H.M."/>
            <person name="Eisen J.A."/>
            <person name="Cary S.C."/>
        </authorList>
    </citation>
    <scope>NUCLEOTIDE SEQUENCE [LARGE SCALE GENOMIC DNA]</scope>
    <source>
        <strain>ATCC BAA-1463 / DSM 18972 / AmH</strain>
    </source>
</reference>
<keyword id="KW-0004">4Fe-4S</keyword>
<keyword id="KW-0408">Iron</keyword>
<keyword id="KW-0411">Iron-sulfur</keyword>
<keyword id="KW-0456">Lyase</keyword>
<keyword id="KW-0479">Metal-binding</keyword>
<keyword id="KW-0949">S-adenosyl-L-methionine</keyword>
<keyword id="KW-0784">Thiamine biosynthesis</keyword>
<keyword id="KW-0862">Zinc</keyword>
<evidence type="ECO:0000255" key="1">
    <source>
        <dbReference type="HAMAP-Rule" id="MF_00089"/>
    </source>
</evidence>
<comment type="function">
    <text evidence="1">Catalyzes the synthesis of the hydroxymethylpyrimidine phosphate (HMP-P) moiety of thiamine from aminoimidazole ribotide (AIR) in a radical S-adenosyl-L-methionine (SAM)-dependent reaction.</text>
</comment>
<comment type="catalytic activity">
    <reaction evidence="1">
        <text>5-amino-1-(5-phospho-beta-D-ribosyl)imidazole + S-adenosyl-L-methionine = 4-amino-2-methyl-5-(phosphooxymethyl)pyrimidine + CO + 5'-deoxyadenosine + formate + L-methionine + 3 H(+)</text>
        <dbReference type="Rhea" id="RHEA:24840"/>
        <dbReference type="ChEBI" id="CHEBI:15378"/>
        <dbReference type="ChEBI" id="CHEBI:15740"/>
        <dbReference type="ChEBI" id="CHEBI:17245"/>
        <dbReference type="ChEBI" id="CHEBI:17319"/>
        <dbReference type="ChEBI" id="CHEBI:57844"/>
        <dbReference type="ChEBI" id="CHEBI:58354"/>
        <dbReference type="ChEBI" id="CHEBI:59789"/>
        <dbReference type="ChEBI" id="CHEBI:137981"/>
        <dbReference type="EC" id="4.1.99.17"/>
    </reaction>
</comment>
<comment type="cofactor">
    <cofactor evidence="1">
        <name>[4Fe-4S] cluster</name>
        <dbReference type="ChEBI" id="CHEBI:49883"/>
    </cofactor>
    <text evidence="1">Binds 1 [4Fe-4S] cluster per subunit. The cluster is coordinated with 3 cysteines and an exchangeable S-adenosyl-L-methionine.</text>
</comment>
<comment type="pathway">
    <text evidence="1">Cofactor biosynthesis; thiamine diphosphate biosynthesis.</text>
</comment>
<comment type="subunit">
    <text evidence="1">Homodimer.</text>
</comment>
<comment type="similarity">
    <text evidence="1">Belongs to the ThiC family.</text>
</comment>
<proteinExistence type="inferred from homology"/>
<dbReference type="EC" id="4.1.99.17" evidence="1"/>
<dbReference type="EMBL" id="CP001279">
    <property type="protein sequence ID" value="ACM92736.1"/>
    <property type="molecule type" value="Genomic_DNA"/>
</dbReference>
<dbReference type="RefSeq" id="WP_015901788.1">
    <property type="nucleotide sequence ID" value="NC_012115.1"/>
</dbReference>
<dbReference type="SMR" id="B9L811"/>
<dbReference type="STRING" id="598659.NAMH_0346"/>
<dbReference type="KEGG" id="nam:NAMH_0346"/>
<dbReference type="eggNOG" id="COG0422">
    <property type="taxonomic scope" value="Bacteria"/>
</dbReference>
<dbReference type="HOGENOM" id="CLU_013181_2_1_7"/>
<dbReference type="OrthoDB" id="9805897at2"/>
<dbReference type="UniPathway" id="UPA00060"/>
<dbReference type="Proteomes" id="UP000000448">
    <property type="component" value="Chromosome"/>
</dbReference>
<dbReference type="GO" id="GO:0005829">
    <property type="term" value="C:cytosol"/>
    <property type="evidence" value="ECO:0007669"/>
    <property type="project" value="TreeGrafter"/>
</dbReference>
<dbReference type="GO" id="GO:0051539">
    <property type="term" value="F:4 iron, 4 sulfur cluster binding"/>
    <property type="evidence" value="ECO:0007669"/>
    <property type="project" value="UniProtKB-KW"/>
</dbReference>
<dbReference type="GO" id="GO:0016830">
    <property type="term" value="F:carbon-carbon lyase activity"/>
    <property type="evidence" value="ECO:0007669"/>
    <property type="project" value="InterPro"/>
</dbReference>
<dbReference type="GO" id="GO:0008270">
    <property type="term" value="F:zinc ion binding"/>
    <property type="evidence" value="ECO:0007669"/>
    <property type="project" value="UniProtKB-UniRule"/>
</dbReference>
<dbReference type="GO" id="GO:0009228">
    <property type="term" value="P:thiamine biosynthetic process"/>
    <property type="evidence" value="ECO:0007669"/>
    <property type="project" value="UniProtKB-KW"/>
</dbReference>
<dbReference type="GO" id="GO:0009229">
    <property type="term" value="P:thiamine diphosphate biosynthetic process"/>
    <property type="evidence" value="ECO:0007669"/>
    <property type="project" value="UniProtKB-UniRule"/>
</dbReference>
<dbReference type="FunFam" id="3.20.20.540:FF:000001">
    <property type="entry name" value="Phosphomethylpyrimidine synthase"/>
    <property type="match status" value="1"/>
</dbReference>
<dbReference type="Gene3D" id="6.10.250.620">
    <property type="match status" value="1"/>
</dbReference>
<dbReference type="Gene3D" id="3.20.20.540">
    <property type="entry name" value="Radical SAM ThiC family, central domain"/>
    <property type="match status" value="1"/>
</dbReference>
<dbReference type="HAMAP" id="MF_00089">
    <property type="entry name" value="ThiC"/>
    <property type="match status" value="1"/>
</dbReference>
<dbReference type="InterPro" id="IPR037509">
    <property type="entry name" value="ThiC"/>
</dbReference>
<dbReference type="InterPro" id="IPR038521">
    <property type="entry name" value="ThiC/Bza_core_dom"/>
</dbReference>
<dbReference type="InterPro" id="IPR002817">
    <property type="entry name" value="ThiC/BzaA/B"/>
</dbReference>
<dbReference type="NCBIfam" id="NF006763">
    <property type="entry name" value="PRK09284.1"/>
    <property type="match status" value="1"/>
</dbReference>
<dbReference type="NCBIfam" id="NF009895">
    <property type="entry name" value="PRK13352.1"/>
    <property type="match status" value="1"/>
</dbReference>
<dbReference type="NCBIfam" id="TIGR00190">
    <property type="entry name" value="thiC"/>
    <property type="match status" value="1"/>
</dbReference>
<dbReference type="PANTHER" id="PTHR30557:SF1">
    <property type="entry name" value="PHOSPHOMETHYLPYRIMIDINE SYNTHASE, CHLOROPLASTIC"/>
    <property type="match status" value="1"/>
</dbReference>
<dbReference type="PANTHER" id="PTHR30557">
    <property type="entry name" value="THIAMINE BIOSYNTHESIS PROTEIN THIC"/>
    <property type="match status" value="1"/>
</dbReference>
<dbReference type="Pfam" id="PF01964">
    <property type="entry name" value="ThiC_Rad_SAM"/>
    <property type="match status" value="1"/>
</dbReference>
<dbReference type="SFLD" id="SFLDF00407">
    <property type="entry name" value="phosphomethylpyrimidine_syntha"/>
    <property type="match status" value="1"/>
</dbReference>
<dbReference type="SFLD" id="SFLDG01114">
    <property type="entry name" value="phosphomethylpyrimidine_syntha"/>
    <property type="match status" value="1"/>
</dbReference>
<dbReference type="SFLD" id="SFLDS00113">
    <property type="entry name" value="Radical_SAM_Phosphomethylpyrim"/>
    <property type="match status" value="1"/>
</dbReference>
<sequence length="461" mass="52197">MRTEWIKKRMNDKTRTQMYYAKKGIITEEMEYVAKEENLDPELVRSEVARGRLIIPANINHKHLKPMAIGRVSKTKVNSNIGASALASDIEEEVRKLETSVKYGADTVMDLSAGAKNMDEIREAIIAASPVPIGTVPMYQIIDEIGDVLELTYDDILRVLEKQAKQGVSYFTIHAGLLLRHMPEIAKRKMGIVSRGGSLTASWMLKHHKENPFYTIFDDILDICKEYDVSLSLGDSLRPGCLYDASDKAQLEELKVLGELTLRAWDKDVQVMIEGPGHVPINEIERNVRLEQIYCHEAPFYVLGPLVLDIGAGYDHIGSAIGAAMAAWYGVSMLCYVTPKEHLGLPNEEDVREGMLAYKIAAHSADIARKIPGARDKDDEMSDARYKFDWKKQFELALDPERAKEYHDETLPQEVFKEAEFCSMCGPKFCSYKVTQDAMENFDWDEFKKEAEEKMKAEANN</sequence>
<accession>B9L811</accession>